<comment type="function">
    <text evidence="1">Catalyzes the transfer of a methyl group from 5-methyltetrahydrofolate to homocysteine resulting in methionine formation.</text>
</comment>
<comment type="catalytic activity">
    <reaction evidence="1">
        <text>5-methyltetrahydropteroyltri-L-glutamate + L-homocysteine = tetrahydropteroyltri-L-glutamate + L-methionine</text>
        <dbReference type="Rhea" id="RHEA:21196"/>
        <dbReference type="ChEBI" id="CHEBI:57844"/>
        <dbReference type="ChEBI" id="CHEBI:58140"/>
        <dbReference type="ChEBI" id="CHEBI:58199"/>
        <dbReference type="ChEBI" id="CHEBI:58207"/>
        <dbReference type="EC" id="2.1.1.14"/>
    </reaction>
</comment>
<comment type="cofactor">
    <cofactor evidence="1">
        <name>Zn(2+)</name>
        <dbReference type="ChEBI" id="CHEBI:29105"/>
    </cofactor>
    <text evidence="1">Binds 1 zinc ion per subunit.</text>
</comment>
<comment type="pathway">
    <text evidence="1">Amino-acid biosynthesis; L-methionine biosynthesis via de novo pathway; L-methionine from L-homocysteine (MetE route): step 1/1.</text>
</comment>
<comment type="similarity">
    <text evidence="1">Belongs to the vitamin-B12 independent methionine synthase family.</text>
</comment>
<feature type="chain" id="PRO_0000098636" description="5-methyltetrahydropteroyltriglutamate--homocysteine methyltransferase">
    <location>
        <begin position="1"/>
        <end position="765"/>
    </location>
</feature>
<feature type="active site" description="Proton donor" evidence="1">
    <location>
        <position position="700"/>
    </location>
</feature>
<feature type="binding site" evidence="1">
    <location>
        <begin position="18"/>
        <end position="21"/>
    </location>
    <ligand>
        <name>5-methyltetrahydropteroyltri-L-glutamate</name>
        <dbReference type="ChEBI" id="CHEBI:58207"/>
    </ligand>
</feature>
<feature type="binding site" evidence="1">
    <location>
        <position position="114"/>
    </location>
    <ligand>
        <name>5-methyltetrahydropteroyltri-L-glutamate</name>
        <dbReference type="ChEBI" id="CHEBI:58207"/>
    </ligand>
</feature>
<feature type="binding site" evidence="1">
    <location>
        <begin position="437"/>
        <end position="439"/>
    </location>
    <ligand>
        <name>L-homocysteine</name>
        <dbReference type="ChEBI" id="CHEBI:58199"/>
    </ligand>
</feature>
<feature type="binding site" evidence="1">
    <location>
        <begin position="437"/>
        <end position="439"/>
    </location>
    <ligand>
        <name>L-methionine</name>
        <dbReference type="ChEBI" id="CHEBI:57844"/>
    </ligand>
</feature>
<feature type="binding site" evidence="1">
    <location>
        <position position="490"/>
    </location>
    <ligand>
        <name>L-homocysteine</name>
        <dbReference type="ChEBI" id="CHEBI:58199"/>
    </ligand>
</feature>
<feature type="binding site" evidence="1">
    <location>
        <position position="490"/>
    </location>
    <ligand>
        <name>L-methionine</name>
        <dbReference type="ChEBI" id="CHEBI:57844"/>
    </ligand>
</feature>
<feature type="binding site" evidence="1">
    <location>
        <position position="567"/>
    </location>
    <ligand>
        <name>5-methyltetrahydropteroyltri-L-glutamate</name>
        <dbReference type="ChEBI" id="CHEBI:58207"/>
    </ligand>
</feature>
<feature type="binding site" evidence="1">
    <location>
        <position position="605"/>
    </location>
    <ligand>
        <name>L-homocysteine</name>
        <dbReference type="ChEBI" id="CHEBI:58199"/>
    </ligand>
</feature>
<feature type="binding site" evidence="1">
    <location>
        <position position="605"/>
    </location>
    <ligand>
        <name>L-methionine</name>
        <dbReference type="ChEBI" id="CHEBI:57844"/>
    </ligand>
</feature>
<feature type="binding site" evidence="1">
    <location>
        <position position="611"/>
    </location>
    <ligand>
        <name>5-methyltetrahydropteroyltri-L-glutamate</name>
        <dbReference type="ChEBI" id="CHEBI:58207"/>
    </ligand>
</feature>
<feature type="binding site" evidence="1">
    <location>
        <position position="647"/>
    </location>
    <ligand>
        <name>Zn(2+)</name>
        <dbReference type="ChEBI" id="CHEBI:29105"/>
        <note>catalytic</note>
    </ligand>
</feature>
<feature type="binding site" evidence="1">
    <location>
        <position position="649"/>
    </location>
    <ligand>
        <name>Zn(2+)</name>
        <dbReference type="ChEBI" id="CHEBI:29105"/>
        <note>catalytic</note>
    </ligand>
</feature>
<feature type="binding site" evidence="1">
    <location>
        <position position="671"/>
    </location>
    <ligand>
        <name>Zn(2+)</name>
        <dbReference type="ChEBI" id="CHEBI:29105"/>
        <note>catalytic</note>
    </ligand>
</feature>
<feature type="binding site" evidence="1">
    <location>
        <position position="732"/>
    </location>
    <ligand>
        <name>Zn(2+)</name>
        <dbReference type="ChEBI" id="CHEBI:29105"/>
        <note>catalytic</note>
    </ligand>
</feature>
<evidence type="ECO:0000255" key="1">
    <source>
        <dbReference type="HAMAP-Rule" id="MF_00172"/>
    </source>
</evidence>
<organism>
    <name type="scientific">Listeria innocua serovar 6a (strain ATCC BAA-680 / CLIP 11262)</name>
    <dbReference type="NCBI Taxonomy" id="272626"/>
    <lineage>
        <taxon>Bacteria</taxon>
        <taxon>Bacillati</taxon>
        <taxon>Bacillota</taxon>
        <taxon>Bacilli</taxon>
        <taxon>Bacillales</taxon>
        <taxon>Listeriaceae</taxon>
        <taxon>Listeria</taxon>
    </lineage>
</organism>
<protein>
    <recommendedName>
        <fullName evidence="1">5-methyltetrahydropteroyltriglutamate--homocysteine methyltransferase</fullName>
        <ecNumber evidence="1">2.1.1.14</ecNumber>
    </recommendedName>
    <alternativeName>
        <fullName evidence="1">Cobalamin-independent methionine synthase</fullName>
    </alternativeName>
    <alternativeName>
        <fullName evidence="1">Methionine synthase, vitamin-B12 independent isozyme</fullName>
    </alternativeName>
</protein>
<accession>Q92AX9</accession>
<gene>
    <name evidence="1" type="primary">metE</name>
    <name type="ordered locus">lin1789</name>
</gene>
<name>METE_LISIN</name>
<sequence length="765" mass="86291">MVKAISSNLGYPRLGEKREWKRALEKFWNGAISEEELLAETKALRLHALKKQQDKGIDLIPVGDFSFYDQVLDTSVTFGIIPKRFQHDGGKVSLNTYFDIARGKSDAVASEMTKWFNTNYHYIVPELAEADPKVLDNRALYYYEEAKNELGIEGKPVLVGPVTYLKLGKGSDAESFEILLDKFIPAYIEILKELETAGATWVQIDEPYLATSFDKKEIALFEKVYKAFHDAVPNLKIELQTYFESLDYYEEVVNLPVAAVGIDFVHDHGDSIKALKAHGFPQNKYLAAGVIDGRNVWRSDLDAKLALLTDIAHYVAEDKLIVQPSNSLLHVPVTKLSEPDLDEVILGGLSFADQKLDEIAILTKALTEGAESVAAELNEAREAVKALNESSHRNNLEVQAAIANLENVRVDRELPFAERIKLQHEWLKLPLFPTTTIGSFPQSPEVRKTRADWLKGNITDAEYNAFIEKETARWIKIQEDLDIDVLVHGEFERTDMVEYFGQKLAGFQATKFGWVQSYGSRAVRPPLIYGDVAFTEEITVKESVYAQSLTKRPVKGMLTAPVTIINWSFVRDDVPESVVANQVGLALRKEVEALERNGIKVIQVDEPALREGLPLKQARWQKYLDDAVYSFKLTTASVQNDTQIHTHMCYSDFDDIIDTISALDADVISIETSRSHGEIISTFEEVTYDKEIGLGVYDIHSPRVPTVSEIQDNIRRALRAIDAKQFWINPDCGLKTRKEPETIAALQDMIKATKEVRAEYQVLEK</sequence>
<proteinExistence type="inferred from homology"/>
<reference key="1">
    <citation type="journal article" date="2001" name="Science">
        <title>Comparative genomics of Listeria species.</title>
        <authorList>
            <person name="Glaser P."/>
            <person name="Frangeul L."/>
            <person name="Buchrieser C."/>
            <person name="Rusniok C."/>
            <person name="Amend A."/>
            <person name="Baquero F."/>
            <person name="Berche P."/>
            <person name="Bloecker H."/>
            <person name="Brandt P."/>
            <person name="Chakraborty T."/>
            <person name="Charbit A."/>
            <person name="Chetouani F."/>
            <person name="Couve E."/>
            <person name="de Daruvar A."/>
            <person name="Dehoux P."/>
            <person name="Domann E."/>
            <person name="Dominguez-Bernal G."/>
            <person name="Duchaud E."/>
            <person name="Durant L."/>
            <person name="Dussurget O."/>
            <person name="Entian K.-D."/>
            <person name="Fsihi H."/>
            <person name="Garcia-del Portillo F."/>
            <person name="Garrido P."/>
            <person name="Gautier L."/>
            <person name="Goebel W."/>
            <person name="Gomez-Lopez N."/>
            <person name="Hain T."/>
            <person name="Hauf J."/>
            <person name="Jackson D."/>
            <person name="Jones L.-M."/>
            <person name="Kaerst U."/>
            <person name="Kreft J."/>
            <person name="Kuhn M."/>
            <person name="Kunst F."/>
            <person name="Kurapkat G."/>
            <person name="Madueno E."/>
            <person name="Maitournam A."/>
            <person name="Mata Vicente J."/>
            <person name="Ng E."/>
            <person name="Nedjari H."/>
            <person name="Nordsiek G."/>
            <person name="Novella S."/>
            <person name="de Pablos B."/>
            <person name="Perez-Diaz J.-C."/>
            <person name="Purcell R."/>
            <person name="Remmel B."/>
            <person name="Rose M."/>
            <person name="Schlueter T."/>
            <person name="Simoes N."/>
            <person name="Tierrez A."/>
            <person name="Vazquez-Boland J.-A."/>
            <person name="Voss H."/>
            <person name="Wehland J."/>
            <person name="Cossart P."/>
        </authorList>
    </citation>
    <scope>NUCLEOTIDE SEQUENCE [LARGE SCALE GENOMIC DNA]</scope>
    <source>
        <strain>ATCC BAA-680 / CLIP 11262</strain>
    </source>
</reference>
<keyword id="KW-0028">Amino-acid biosynthesis</keyword>
<keyword id="KW-0479">Metal-binding</keyword>
<keyword id="KW-0486">Methionine biosynthesis</keyword>
<keyword id="KW-0489">Methyltransferase</keyword>
<keyword id="KW-0677">Repeat</keyword>
<keyword id="KW-0808">Transferase</keyword>
<keyword id="KW-0862">Zinc</keyword>
<dbReference type="EC" id="2.1.1.14" evidence="1"/>
<dbReference type="EMBL" id="AL596169">
    <property type="protein sequence ID" value="CAC97020.1"/>
    <property type="molecule type" value="Genomic_DNA"/>
</dbReference>
<dbReference type="PIR" id="AD1656">
    <property type="entry name" value="AD1656"/>
</dbReference>
<dbReference type="RefSeq" id="WP_010990956.1">
    <property type="nucleotide sequence ID" value="NC_003212.1"/>
</dbReference>
<dbReference type="SMR" id="Q92AX9"/>
<dbReference type="STRING" id="272626.gene:17566120"/>
<dbReference type="KEGG" id="lin:lin1789"/>
<dbReference type="eggNOG" id="COG0620">
    <property type="taxonomic scope" value="Bacteria"/>
</dbReference>
<dbReference type="HOGENOM" id="CLU_013175_0_0_9"/>
<dbReference type="OrthoDB" id="244285at2"/>
<dbReference type="UniPathway" id="UPA00051">
    <property type="reaction ID" value="UER00082"/>
</dbReference>
<dbReference type="Proteomes" id="UP000002513">
    <property type="component" value="Chromosome"/>
</dbReference>
<dbReference type="GO" id="GO:0003871">
    <property type="term" value="F:5-methyltetrahydropteroyltriglutamate-homocysteine S-methyltransferase activity"/>
    <property type="evidence" value="ECO:0007669"/>
    <property type="project" value="UniProtKB-UniRule"/>
</dbReference>
<dbReference type="GO" id="GO:0008270">
    <property type="term" value="F:zinc ion binding"/>
    <property type="evidence" value="ECO:0007669"/>
    <property type="project" value="InterPro"/>
</dbReference>
<dbReference type="GO" id="GO:0009086">
    <property type="term" value="P:methionine biosynthetic process"/>
    <property type="evidence" value="ECO:0007669"/>
    <property type="project" value="UniProtKB-UniRule"/>
</dbReference>
<dbReference type="GO" id="GO:0032259">
    <property type="term" value="P:methylation"/>
    <property type="evidence" value="ECO:0007669"/>
    <property type="project" value="UniProtKB-KW"/>
</dbReference>
<dbReference type="CDD" id="cd03311">
    <property type="entry name" value="CIMS_C_terminal_like"/>
    <property type="match status" value="1"/>
</dbReference>
<dbReference type="CDD" id="cd03312">
    <property type="entry name" value="CIMS_N_terminal_like"/>
    <property type="match status" value="1"/>
</dbReference>
<dbReference type="Gene3D" id="3.20.20.210">
    <property type="match status" value="2"/>
</dbReference>
<dbReference type="HAMAP" id="MF_00172">
    <property type="entry name" value="Meth_synth"/>
    <property type="match status" value="1"/>
</dbReference>
<dbReference type="InterPro" id="IPR013215">
    <property type="entry name" value="Cbl-indep_Met_Synth_N"/>
</dbReference>
<dbReference type="InterPro" id="IPR006276">
    <property type="entry name" value="Cobalamin-indep_Met_synthase"/>
</dbReference>
<dbReference type="InterPro" id="IPR002629">
    <property type="entry name" value="Met_Synth_C/arc"/>
</dbReference>
<dbReference type="InterPro" id="IPR038071">
    <property type="entry name" value="UROD/MetE-like_sf"/>
</dbReference>
<dbReference type="NCBIfam" id="TIGR01371">
    <property type="entry name" value="met_syn_B12ind"/>
    <property type="match status" value="1"/>
</dbReference>
<dbReference type="NCBIfam" id="NF003556">
    <property type="entry name" value="PRK05222.1"/>
    <property type="match status" value="1"/>
</dbReference>
<dbReference type="PANTHER" id="PTHR30519">
    <property type="entry name" value="5-METHYLTETRAHYDROPTEROYLTRIGLUTAMATE--HOMOCYSTEINE METHYLTRANSFERASE"/>
    <property type="match status" value="1"/>
</dbReference>
<dbReference type="Pfam" id="PF08267">
    <property type="entry name" value="Meth_synt_1"/>
    <property type="match status" value="1"/>
</dbReference>
<dbReference type="Pfam" id="PF01717">
    <property type="entry name" value="Meth_synt_2"/>
    <property type="match status" value="1"/>
</dbReference>
<dbReference type="PIRSF" id="PIRSF000382">
    <property type="entry name" value="MeTrfase_B12_ind"/>
    <property type="match status" value="1"/>
</dbReference>
<dbReference type="SUPFAM" id="SSF51726">
    <property type="entry name" value="UROD/MetE-like"/>
    <property type="match status" value="2"/>
</dbReference>